<reference key="1">
    <citation type="submission" date="2003-02" db="EMBL/GenBank/DDBJ databases">
        <title>Complete nucleotide sequence of Pinus koraiensis.</title>
        <authorList>
            <person name="Noh E.W."/>
            <person name="Lee J.S."/>
            <person name="Choi Y.I."/>
            <person name="Han M.S."/>
            <person name="Yi Y.S."/>
            <person name="Han S.U."/>
        </authorList>
    </citation>
    <scope>NUCLEOTIDE SEQUENCE [LARGE SCALE GENOMIC DNA]</scope>
    <source>
        <strain>KangWon16</strain>
    </source>
</reference>
<protein>
    <recommendedName>
        <fullName evidence="1">Cytochrome b6-f complex subunit 8</fullName>
    </recommendedName>
    <alternativeName>
        <fullName evidence="1">Cytochrome b6-f complex subunit PetN</fullName>
    </alternativeName>
    <alternativeName>
        <fullName evidence="1">Cytochrome b6-f complex subunit VIII</fullName>
    </alternativeName>
</protein>
<evidence type="ECO:0000255" key="1">
    <source>
        <dbReference type="HAMAP-Rule" id="MF_00395"/>
    </source>
</evidence>
<geneLocation type="chloroplast"/>
<organism>
    <name type="scientific">Pinus koraiensis</name>
    <name type="common">Korean pine</name>
    <dbReference type="NCBI Taxonomy" id="88728"/>
    <lineage>
        <taxon>Eukaryota</taxon>
        <taxon>Viridiplantae</taxon>
        <taxon>Streptophyta</taxon>
        <taxon>Embryophyta</taxon>
        <taxon>Tracheophyta</taxon>
        <taxon>Spermatophyta</taxon>
        <taxon>Pinopsida</taxon>
        <taxon>Pinidae</taxon>
        <taxon>Conifers I</taxon>
        <taxon>Pinales</taxon>
        <taxon>Pinaceae</taxon>
        <taxon>Pinus</taxon>
        <taxon>Pinus subgen. Strobus</taxon>
    </lineage>
</organism>
<sequence>MIRMDIVGITWAALMVVFTFSLSLVVWGRSGL</sequence>
<feature type="chain" id="PRO_0000355458" description="Cytochrome b6-f complex subunit 8">
    <location>
        <begin position="1"/>
        <end position="32"/>
    </location>
</feature>
<feature type="transmembrane region" description="Helical" evidence="1">
    <location>
        <begin position="6"/>
        <end position="26"/>
    </location>
</feature>
<accession>A4QM18</accession>
<proteinExistence type="inferred from homology"/>
<keyword id="KW-0150">Chloroplast</keyword>
<keyword id="KW-0249">Electron transport</keyword>
<keyword id="KW-0472">Membrane</keyword>
<keyword id="KW-0602">Photosynthesis</keyword>
<keyword id="KW-0934">Plastid</keyword>
<keyword id="KW-0793">Thylakoid</keyword>
<keyword id="KW-0812">Transmembrane</keyword>
<keyword id="KW-1133">Transmembrane helix</keyword>
<keyword id="KW-0813">Transport</keyword>
<name>PETN_PINKO</name>
<gene>
    <name evidence="1" type="primary">petN</name>
</gene>
<dbReference type="EMBL" id="AY228468">
    <property type="protein sequence ID" value="ABP35340.1"/>
    <property type="molecule type" value="Genomic_DNA"/>
</dbReference>
<dbReference type="RefSeq" id="YP_001152094.1">
    <property type="nucleotide sequence ID" value="NC_004677.2"/>
</dbReference>
<dbReference type="SMR" id="A4QM18"/>
<dbReference type="GeneID" id="5048510"/>
<dbReference type="GO" id="GO:0009535">
    <property type="term" value="C:chloroplast thylakoid membrane"/>
    <property type="evidence" value="ECO:0007669"/>
    <property type="project" value="UniProtKB-SubCell"/>
</dbReference>
<dbReference type="GO" id="GO:0009512">
    <property type="term" value="C:cytochrome b6f complex"/>
    <property type="evidence" value="ECO:0007669"/>
    <property type="project" value="InterPro"/>
</dbReference>
<dbReference type="GO" id="GO:0045158">
    <property type="term" value="F:electron transporter, transferring electrons within cytochrome b6/f complex of photosystem II activity"/>
    <property type="evidence" value="ECO:0007669"/>
    <property type="project" value="InterPro"/>
</dbReference>
<dbReference type="GO" id="GO:0017004">
    <property type="term" value="P:cytochrome complex assembly"/>
    <property type="evidence" value="ECO:0007669"/>
    <property type="project" value="UniProtKB-UniRule"/>
</dbReference>
<dbReference type="GO" id="GO:0015979">
    <property type="term" value="P:photosynthesis"/>
    <property type="evidence" value="ECO:0007669"/>
    <property type="project" value="UniProtKB-KW"/>
</dbReference>
<dbReference type="HAMAP" id="MF_00395">
    <property type="entry name" value="Cytb6_f_PetN"/>
    <property type="match status" value="1"/>
</dbReference>
<dbReference type="InterPro" id="IPR036143">
    <property type="entry name" value="Cytochr_b6-f_cplx_su8_sf"/>
</dbReference>
<dbReference type="InterPro" id="IPR005497">
    <property type="entry name" value="Cytochrome_b6-f_cplx_su8"/>
</dbReference>
<dbReference type="Pfam" id="PF03742">
    <property type="entry name" value="PetN"/>
    <property type="match status" value="1"/>
</dbReference>
<dbReference type="SUPFAM" id="SSF103451">
    <property type="entry name" value="PetN subunit of the cytochrome b6f complex"/>
    <property type="match status" value="1"/>
</dbReference>
<comment type="function">
    <text evidence="1">Component of the cytochrome b6-f complex, which mediates electron transfer between photosystem II (PSII) and photosystem I (PSI), cyclic electron flow around PSI, and state transitions.</text>
</comment>
<comment type="subunit">
    <text evidence="1">The 4 large subunits of the cytochrome b6-f complex are cytochrome b6, subunit IV (17 kDa polypeptide, PetD), cytochrome f and the Rieske protein, while the 4 small subunits are PetG, PetL, PetM and PetN. The complex functions as a dimer.</text>
</comment>
<comment type="subcellular location">
    <subcellularLocation>
        <location evidence="1">Plastid</location>
        <location evidence="1">Chloroplast thylakoid membrane</location>
        <topology evidence="1">Single-pass membrane protein</topology>
    </subcellularLocation>
</comment>
<comment type="similarity">
    <text evidence="1">Belongs to the PetN family.</text>
</comment>